<reference key="1">
    <citation type="book" date="2006" name="Gram positive pathogens, 2nd edition">
        <title>The Staphylococcus aureus NCTC 8325 genome.</title>
        <editorList>
            <person name="Fischetti V."/>
            <person name="Novick R."/>
            <person name="Ferretti J."/>
            <person name="Portnoy D."/>
            <person name="Rood J."/>
        </editorList>
        <authorList>
            <person name="Gillaspy A.F."/>
            <person name="Worrell V."/>
            <person name="Orvis J."/>
            <person name="Roe B.A."/>
            <person name="Dyer D.W."/>
            <person name="Iandolo J.J."/>
        </authorList>
    </citation>
    <scope>NUCLEOTIDE SEQUENCE [LARGE SCALE GENOMIC DNA]</scope>
    <source>
        <strain>NCTC 8325 / PS 47</strain>
    </source>
</reference>
<reference key="2">
    <citation type="journal article" date="2010" name="Infect. Immun.">
        <title>Staphylococcus aureus AI-2 quorum sensing associates with the KdpDE two-component system to regulate capsular polysaccharide synthesis and virulence.</title>
        <authorList>
            <person name="Zhao L."/>
            <person name="Xue T."/>
            <person name="Shang F."/>
            <person name="Sun H."/>
            <person name="Sun B."/>
        </authorList>
    </citation>
    <scope>FUNCTION</scope>
    <scope>DISRUPTION PHENOTYPE</scope>
</reference>
<reference key="3">
    <citation type="journal article" date="2011" name="Infect. Immun.">
        <title>The Staphylococcus aureus KdpDE two-component system couples extracellular K+ sensing and Agr signaling to infection programming.</title>
        <authorList>
            <person name="Xue T."/>
            <person name="You Y."/>
            <person name="Hong D."/>
            <person name="Sun H."/>
            <person name="Sun B."/>
        </authorList>
    </citation>
    <scope>FUNCTION</scope>
    <scope>INDUCTION BY AGR</scope>
</reference>
<reference key="4">
    <citation type="journal article" date="2016" name="J. Bacteriol.">
        <title>Binding of Cyclic Di-AMP to the Staphylococcus aureus Sensor Kinase KdpD Occurs via the Universal Stress Protein Domain and Downregulates the Expression of the Kdp Potassium Transporter.</title>
        <authorList>
            <person name="Moscoso J.A."/>
            <person name="Schramke H."/>
            <person name="Zhang Y."/>
            <person name="Tosi T."/>
            <person name="Dehbi A."/>
            <person name="Jung K."/>
            <person name="Gruendling A."/>
        </authorList>
    </citation>
    <scope>FUNCTION</scope>
    <scope>ACTIVITY REGULATION</scope>
</reference>
<feature type="chain" id="PRO_0000448704" description="Sensor histidine kinase KdpD">
    <location>
        <begin position="1"/>
        <end position="885"/>
    </location>
</feature>
<feature type="transmembrane region" description="Helical" evidence="1">
    <location>
        <begin position="384"/>
        <end position="404"/>
    </location>
</feature>
<feature type="transmembrane region" description="Helical" evidence="1">
    <location>
        <begin position="415"/>
        <end position="435"/>
    </location>
</feature>
<feature type="transmembrane region" description="Helical" evidence="1">
    <location>
        <begin position="436"/>
        <end position="456"/>
    </location>
</feature>
<feature type="transmembrane region" description="Helical" evidence="1">
    <location>
        <begin position="464"/>
        <end position="484"/>
    </location>
</feature>
<feature type="domain" description="Histidine kinase" evidence="2">
    <location>
        <begin position="660"/>
        <end position="880"/>
    </location>
</feature>
<feature type="modified residue" description="Phosphohistidine; by autocatalysis" evidence="2">
    <location>
        <position position="663"/>
    </location>
</feature>
<feature type="strand" evidence="7">
    <location>
        <begin position="238"/>
        <end position="243"/>
    </location>
</feature>
<feature type="helix" evidence="7">
    <location>
        <begin position="249"/>
        <end position="262"/>
    </location>
</feature>
<feature type="strand" evidence="7">
    <location>
        <begin position="266"/>
        <end position="273"/>
    </location>
</feature>
<feature type="helix" evidence="7">
    <location>
        <begin position="285"/>
        <end position="297"/>
    </location>
</feature>
<feature type="strand" evidence="7">
    <location>
        <begin position="301"/>
        <end position="306"/>
    </location>
</feature>
<feature type="helix" evidence="7">
    <location>
        <begin position="310"/>
        <end position="320"/>
    </location>
</feature>
<feature type="strand" evidence="7">
    <location>
        <begin position="324"/>
        <end position="329"/>
    </location>
</feature>
<feature type="helix" evidence="7">
    <location>
        <begin position="339"/>
        <end position="341"/>
    </location>
</feature>
<feature type="helix" evidence="7">
    <location>
        <begin position="344"/>
        <end position="350"/>
    </location>
</feature>
<feature type="strand" evidence="7">
    <location>
        <begin position="354"/>
        <end position="360"/>
    </location>
</feature>
<sequence>MSNTESLNIGKKRGSLTIYIGYSPGVGKTFEMLSNAIELFQSNVDIKIGYIEPHQRDETNALAEQLPKITTNFTKHGSHHFQYLDVDRIIEESPTIVLIDELAHTNISRDRHEKRYMDIEEILNHGIDVHTTLNIQHIESLSSQIELMTGVHVKERVPDYFIMSADVLEVVDISPEQLIKRLKAGKVYKKDRLDVAFSNFFTYAHLSELRTLTLRTVADLMSDKEKVRHNHKTSLKPHIAVAISGSIYNEAVIKEAFHIAQKEHAKFTAIYIDVFEKNRQYKDSQKQVHQHLMLAKSLGAKVKVVYSQTVALGLDEWCKNQDVTKLIIGQHIRNKWRDFFNTPLIDHLMSFEHSYKIEIVPIKQIPVELKMNKSPYRPKGKRFAIDMLKMILIQIICVMMGLWIYQLDKHESSTIILMIFLIGIILLSIWTRSFIIGFLAAIINVFVFNYFFTEPRYTFEVYRFDYPITFIVSILTSILTSALLKQIKFQYSITKKQLYRTDLLFQFNDSIKQTYTVENLLINAGYQINQLLQQSITIYVINQSKVIKTIPLQNHIDNTTQQHEQALSWVIKNERQAGATTDTFPGINKWLIPIGTSPIKGILAIDYQSSQVINPYDASILESMLNELSLAVENVTLLKQTRESMLQAERQLTHSNFLRSISHDIRTPLTTIMGNLDILVSHSKDMSIIEKEQLLVHSFQESQYLYLLVTNILSLTKLQSSNVQIKLQPYLVSELVEEIDMILERRHLKKRITVSSSVNLQFIHIDSKLILQALFNLIENAVKHTSTDTKINLSIRYASYEQIEFAVIDEGPGISLEEQQKIFEPFYTGSNKYFKDNQKESMGLGLYLVQTILHKHQSNLQYKPNQPHGSIFYFNIYTDFNEGDV</sequence>
<comment type="function">
    <text evidence="3 4 5">Member of the two-component regulatory system KdpD/KdpE that regulates the transcription of a series of virulence factors through sensing external K(+) concentrations (PubMed:21422185, PubMed:26195599). Also regulates capsular polysaccharide production (PubMed:20498265). May function as a membrane-associated protein kinase that phosphorylates KdpE in response to environmental signals. In turn, KpdE functions as a transcriptional regulator by direct binding to promoter regions of target genes including spa, hla, aur and geh (PubMed:21422185).</text>
</comment>
<comment type="catalytic activity">
    <reaction>
        <text>ATP + protein L-histidine = ADP + protein N-phospho-L-histidine.</text>
        <dbReference type="EC" id="2.7.13.3"/>
    </reaction>
</comment>
<comment type="activity regulation">
    <text evidence="5">Cyclic di-AMP is a negative regulator of the Kdp system.</text>
</comment>
<comment type="subcellular location">
    <subcellularLocation>
        <location evidence="1">Membrane</location>
        <topology evidence="1">Multi-pass membrane protein</topology>
    </subcellularLocation>
</comment>
<comment type="induction">
    <text evidence="4">By the Agr/RNAIII system.</text>
</comment>
<comment type="disruption phenotype">
    <text evidence="3">Inactivation of kdpD results in decreased transcript level of cap.</text>
</comment>
<organism>
    <name type="scientific">Staphylococcus aureus (strain NCTC 8325 / PS 47)</name>
    <dbReference type="NCBI Taxonomy" id="93061"/>
    <lineage>
        <taxon>Bacteria</taxon>
        <taxon>Bacillati</taxon>
        <taxon>Bacillota</taxon>
        <taxon>Bacilli</taxon>
        <taxon>Bacillales</taxon>
        <taxon>Staphylococcaceae</taxon>
        <taxon>Staphylococcus</taxon>
    </lineage>
</organism>
<proteinExistence type="evidence at protein level"/>
<protein>
    <recommendedName>
        <fullName evidence="6">Sensor histidine kinase KdpD</fullName>
        <ecNumber>2.7.13.3</ecNumber>
    </recommendedName>
</protein>
<name>KDPD_STAA8</name>
<gene>
    <name evidence="6" type="primary">kdpD</name>
    <name type="ordered locus">SAOUHSC_02314</name>
</gene>
<keyword id="KW-0002">3D-structure</keyword>
<keyword id="KW-0067">ATP-binding</keyword>
<keyword id="KW-0418">Kinase</keyword>
<keyword id="KW-0472">Membrane</keyword>
<keyword id="KW-0547">Nucleotide-binding</keyword>
<keyword id="KW-0597">Phosphoprotein</keyword>
<keyword id="KW-1185">Reference proteome</keyword>
<keyword id="KW-0808">Transferase</keyword>
<keyword id="KW-0812">Transmembrane</keyword>
<keyword id="KW-1133">Transmembrane helix</keyword>
<keyword id="KW-0902">Two-component regulatory system</keyword>
<evidence type="ECO:0000255" key="1"/>
<evidence type="ECO:0000255" key="2">
    <source>
        <dbReference type="PROSITE-ProRule" id="PRU00107"/>
    </source>
</evidence>
<evidence type="ECO:0000269" key="3">
    <source>
    </source>
</evidence>
<evidence type="ECO:0000269" key="4">
    <source>
    </source>
</evidence>
<evidence type="ECO:0000269" key="5">
    <source>
    </source>
</evidence>
<evidence type="ECO:0000303" key="6">
    <source>
    </source>
</evidence>
<evidence type="ECO:0007829" key="7">
    <source>
        <dbReference type="PDB" id="7JI4"/>
    </source>
</evidence>
<accession>Q2FWH7</accession>
<dbReference type="EC" id="2.7.13.3"/>
<dbReference type="EMBL" id="CP000253">
    <property type="protein sequence ID" value="ABD31348.1"/>
    <property type="molecule type" value="Genomic_DNA"/>
</dbReference>
<dbReference type="RefSeq" id="WP_000072278.1">
    <property type="nucleotide sequence ID" value="NZ_LS483365.1"/>
</dbReference>
<dbReference type="RefSeq" id="YP_500793.1">
    <property type="nucleotide sequence ID" value="NC_007795.1"/>
</dbReference>
<dbReference type="PDB" id="7JI4">
    <property type="method" value="X-ray"/>
    <property type="resolution" value="2.30 A"/>
    <property type="chains" value="A=213-364"/>
</dbReference>
<dbReference type="PDBsum" id="7JI4"/>
<dbReference type="SMR" id="Q2FWH7"/>
<dbReference type="STRING" id="93061.SAOUHSC_02314"/>
<dbReference type="PaxDb" id="1280-SAXN108_2323"/>
<dbReference type="GeneID" id="3920939"/>
<dbReference type="KEGG" id="sao:SAOUHSC_02314"/>
<dbReference type="PATRIC" id="fig|93061.5.peg.2097"/>
<dbReference type="eggNOG" id="COG2205">
    <property type="taxonomic scope" value="Bacteria"/>
</dbReference>
<dbReference type="HOGENOM" id="CLU_000445_113_3_9"/>
<dbReference type="OrthoDB" id="9806130at2"/>
<dbReference type="Proteomes" id="UP000008816">
    <property type="component" value="Chromosome"/>
</dbReference>
<dbReference type="GO" id="GO:0005886">
    <property type="term" value="C:plasma membrane"/>
    <property type="evidence" value="ECO:0000318"/>
    <property type="project" value="GO_Central"/>
</dbReference>
<dbReference type="GO" id="GO:0005524">
    <property type="term" value="F:ATP binding"/>
    <property type="evidence" value="ECO:0007669"/>
    <property type="project" value="UniProtKB-KW"/>
</dbReference>
<dbReference type="GO" id="GO:0000155">
    <property type="term" value="F:phosphorelay sensor kinase activity"/>
    <property type="evidence" value="ECO:0000318"/>
    <property type="project" value="GO_Central"/>
</dbReference>
<dbReference type="CDD" id="cd00075">
    <property type="entry name" value="HATPase"/>
    <property type="match status" value="1"/>
</dbReference>
<dbReference type="CDD" id="cd00082">
    <property type="entry name" value="HisKA"/>
    <property type="match status" value="1"/>
</dbReference>
<dbReference type="CDD" id="cd01987">
    <property type="entry name" value="USP_KdpD-like"/>
    <property type="match status" value="1"/>
</dbReference>
<dbReference type="FunFam" id="3.40.50.300:FF:000483">
    <property type="entry name" value="Sensor histidine kinase KdpD"/>
    <property type="match status" value="1"/>
</dbReference>
<dbReference type="Gene3D" id="1.10.287.130">
    <property type="match status" value="1"/>
</dbReference>
<dbReference type="Gene3D" id="3.30.450.40">
    <property type="match status" value="1"/>
</dbReference>
<dbReference type="Gene3D" id="1.20.120.620">
    <property type="entry name" value="Backbone structure of the membrane domain of e. Coli histidine kinase receptor kdpd"/>
    <property type="match status" value="1"/>
</dbReference>
<dbReference type="Gene3D" id="3.30.565.10">
    <property type="entry name" value="Histidine kinase-like ATPase, C-terminal domain"/>
    <property type="match status" value="1"/>
</dbReference>
<dbReference type="Gene3D" id="3.40.50.300">
    <property type="entry name" value="P-loop containing nucleotide triphosphate hydrolases"/>
    <property type="match status" value="1"/>
</dbReference>
<dbReference type="InterPro" id="IPR029016">
    <property type="entry name" value="GAF-like_dom_sf"/>
</dbReference>
<dbReference type="InterPro" id="IPR036890">
    <property type="entry name" value="HATPase_C_sf"/>
</dbReference>
<dbReference type="InterPro" id="IPR005467">
    <property type="entry name" value="His_kinase_dom"/>
</dbReference>
<dbReference type="InterPro" id="IPR003661">
    <property type="entry name" value="HisK_dim/P_dom"/>
</dbReference>
<dbReference type="InterPro" id="IPR036097">
    <property type="entry name" value="HisK_dim/P_sf"/>
</dbReference>
<dbReference type="InterPro" id="IPR052023">
    <property type="entry name" value="Histidine_kinase_KdpD"/>
</dbReference>
<dbReference type="InterPro" id="IPR038318">
    <property type="entry name" value="KdpD_sf"/>
</dbReference>
<dbReference type="InterPro" id="IPR025201">
    <property type="entry name" value="KdpD_TM"/>
</dbReference>
<dbReference type="InterPro" id="IPR027417">
    <property type="entry name" value="P-loop_NTPase"/>
</dbReference>
<dbReference type="InterPro" id="IPR004358">
    <property type="entry name" value="Sig_transdc_His_kin-like_C"/>
</dbReference>
<dbReference type="InterPro" id="IPR003852">
    <property type="entry name" value="Sig_transdc_His_kinase_KdpD_N"/>
</dbReference>
<dbReference type="PANTHER" id="PTHR45569">
    <property type="entry name" value="SENSOR PROTEIN KDPD"/>
    <property type="match status" value="1"/>
</dbReference>
<dbReference type="PANTHER" id="PTHR45569:SF1">
    <property type="entry name" value="SENSOR PROTEIN KDPD"/>
    <property type="match status" value="1"/>
</dbReference>
<dbReference type="Pfam" id="PF13493">
    <property type="entry name" value="DUF4118"/>
    <property type="match status" value="1"/>
</dbReference>
<dbReference type="Pfam" id="PF02518">
    <property type="entry name" value="HATPase_c"/>
    <property type="match status" value="1"/>
</dbReference>
<dbReference type="Pfam" id="PF00512">
    <property type="entry name" value="HisKA"/>
    <property type="match status" value="1"/>
</dbReference>
<dbReference type="Pfam" id="PF02702">
    <property type="entry name" value="KdpD"/>
    <property type="match status" value="1"/>
</dbReference>
<dbReference type="PRINTS" id="PR00344">
    <property type="entry name" value="BCTRLSENSOR"/>
</dbReference>
<dbReference type="SMART" id="SM00387">
    <property type="entry name" value="HATPase_c"/>
    <property type="match status" value="1"/>
</dbReference>
<dbReference type="SMART" id="SM00388">
    <property type="entry name" value="HisKA"/>
    <property type="match status" value="1"/>
</dbReference>
<dbReference type="SUPFAM" id="SSF52402">
    <property type="entry name" value="Adenine nucleotide alpha hydrolases-like"/>
    <property type="match status" value="1"/>
</dbReference>
<dbReference type="SUPFAM" id="SSF55874">
    <property type="entry name" value="ATPase domain of HSP90 chaperone/DNA topoisomerase II/histidine kinase"/>
    <property type="match status" value="1"/>
</dbReference>
<dbReference type="SUPFAM" id="SSF47384">
    <property type="entry name" value="Homodimeric domain of signal transducing histidine kinase"/>
    <property type="match status" value="1"/>
</dbReference>
<dbReference type="PROSITE" id="PS50109">
    <property type="entry name" value="HIS_KIN"/>
    <property type="match status" value="1"/>
</dbReference>